<evidence type="ECO:0000250" key="1">
    <source>
        <dbReference type="UniProtKB" id="P61008"/>
    </source>
</evidence>
<evidence type="ECO:0000250" key="2">
    <source>
        <dbReference type="UniProtKB" id="P61009"/>
    </source>
</evidence>
<evidence type="ECO:0000250" key="3">
    <source>
        <dbReference type="UniProtKB" id="Q12133"/>
    </source>
</evidence>
<evidence type="ECO:0000255" key="4"/>
<evidence type="ECO:0000269" key="5">
    <source>
    </source>
</evidence>
<evidence type="ECO:0000305" key="6"/>
<evidence type="ECO:0000312" key="7">
    <source>
        <dbReference type="WormBase" id="K12H4.4"/>
    </source>
</evidence>
<reference key="1">
    <citation type="journal article" date="1994" name="Nature">
        <title>2.2 Mb of contiguous nucleotide sequence from chromosome III of C. elegans.</title>
        <authorList>
            <person name="Wilson R."/>
            <person name="Ainscough R."/>
            <person name="Anderson K."/>
            <person name="Baynes C."/>
            <person name="Berks M."/>
            <person name="Bonfield J."/>
            <person name="Burton J."/>
            <person name="Connell M."/>
            <person name="Copsey T."/>
            <person name="Cooper J."/>
            <person name="Coulson A."/>
            <person name="Craxton M."/>
            <person name="Dear S."/>
            <person name="Du Z."/>
            <person name="Durbin R."/>
            <person name="Favello A."/>
            <person name="Fraser A."/>
            <person name="Fulton L."/>
            <person name="Gardner A."/>
            <person name="Green P."/>
            <person name="Hawkins T."/>
            <person name="Hillier L."/>
            <person name="Jier M."/>
            <person name="Johnston L."/>
            <person name="Jones M."/>
            <person name="Kershaw J."/>
            <person name="Kirsten J."/>
            <person name="Laisster N."/>
            <person name="Latreille P."/>
            <person name="Lightning J."/>
            <person name="Lloyd C."/>
            <person name="Mortimore B."/>
            <person name="O'Callaghan M."/>
            <person name="Parsons J."/>
            <person name="Percy C."/>
            <person name="Rifken L."/>
            <person name="Roopra A."/>
            <person name="Saunders D."/>
            <person name="Shownkeen R."/>
            <person name="Sims M."/>
            <person name="Smaldon N."/>
            <person name="Smith A."/>
            <person name="Smith M."/>
            <person name="Sonnhammer E."/>
            <person name="Staden R."/>
            <person name="Sulston J."/>
            <person name="Thierry-Mieg J."/>
            <person name="Thomas K."/>
            <person name="Vaudin M."/>
            <person name="Vaughan K."/>
            <person name="Waterston R."/>
            <person name="Watson A."/>
            <person name="Weinstock L."/>
            <person name="Wilkinson-Sproat J."/>
            <person name="Wohldman P."/>
        </authorList>
    </citation>
    <scope>NUCLEOTIDE SEQUENCE [LARGE SCALE GENOMIC DNA]</scope>
    <source>
        <strain>Bristol N2</strain>
    </source>
</reference>
<reference key="2">
    <citation type="journal article" date="1998" name="Science">
        <title>Genome sequence of the nematode C. elegans: a platform for investigating biology.</title>
        <authorList>
            <consortium name="The C. elegans sequencing consortium"/>
        </authorList>
    </citation>
    <scope>NUCLEOTIDE SEQUENCE [LARGE SCALE GENOMIC DNA]</scope>
    <source>
        <strain>Bristol N2</strain>
    </source>
</reference>
<reference key="3">
    <citation type="journal article" date="2005" name="Glycobiology">
        <title>Identification of the hydrophobic glycoproteins of Caenorhabditis elegans.</title>
        <authorList>
            <person name="Fan X."/>
            <person name="She Y.-M."/>
            <person name="Bagshaw R.D."/>
            <person name="Callahan J.W."/>
            <person name="Schachter H."/>
            <person name="Mahuran D.J."/>
        </authorList>
    </citation>
    <scope>GLYCOSYLATION [LARGE SCALE ANALYSIS] AT ASN-141</scope>
    <scope>IDENTIFICATION BY MASS SPECTROMETRY</scope>
</reference>
<proteinExistence type="evidence at protein level"/>
<dbReference type="EMBL" id="BX284603">
    <property type="protein sequence ID" value="CCD71196.1"/>
    <property type="molecule type" value="Genomic_DNA"/>
</dbReference>
<dbReference type="PIR" id="S44854">
    <property type="entry name" value="S44854"/>
</dbReference>
<dbReference type="RefSeq" id="NP_498755.1">
    <property type="nucleotide sequence ID" value="NM_066354.7"/>
</dbReference>
<dbReference type="SMR" id="P34525"/>
<dbReference type="BioGRID" id="41339">
    <property type="interactions" value="4"/>
</dbReference>
<dbReference type="FunCoup" id="P34525">
    <property type="interactions" value="1567"/>
</dbReference>
<dbReference type="IntAct" id="P34525">
    <property type="interactions" value="1"/>
</dbReference>
<dbReference type="STRING" id="6239.K12H4.4.1"/>
<dbReference type="MEROPS" id="X45.001"/>
<dbReference type="GlyCosmos" id="P34525">
    <property type="glycosylation" value="1 site, No reported glycans"/>
</dbReference>
<dbReference type="iPTMnet" id="P34525"/>
<dbReference type="PaxDb" id="6239-K12H4.4"/>
<dbReference type="PeptideAtlas" id="P34525"/>
<dbReference type="EnsemblMetazoa" id="K12H4.4.1">
    <property type="protein sequence ID" value="K12H4.4.1"/>
    <property type="gene ID" value="WBGene00019679"/>
</dbReference>
<dbReference type="GeneID" id="176133"/>
<dbReference type="KEGG" id="cel:CELE_K12H4.4"/>
<dbReference type="UCSC" id="K12H4.4.1">
    <property type="organism name" value="c. elegans"/>
</dbReference>
<dbReference type="AGR" id="WB:WBGene00019679"/>
<dbReference type="CTD" id="176133"/>
<dbReference type="WormBase" id="K12H4.4">
    <property type="protein sequence ID" value="CE00269"/>
    <property type="gene ID" value="WBGene00019679"/>
    <property type="gene designation" value="spcs-3"/>
</dbReference>
<dbReference type="eggNOG" id="KOG3372">
    <property type="taxonomic scope" value="Eukaryota"/>
</dbReference>
<dbReference type="GeneTree" id="ENSGT00940000169388"/>
<dbReference type="HOGENOM" id="CLU_068714_1_0_1"/>
<dbReference type="InParanoid" id="P34525"/>
<dbReference type="OMA" id="FWDDGHG"/>
<dbReference type="OrthoDB" id="10261524at2759"/>
<dbReference type="PhylomeDB" id="P34525"/>
<dbReference type="BRENDA" id="3.4.21.89">
    <property type="organism ID" value="1045"/>
</dbReference>
<dbReference type="PRO" id="PR:P34525"/>
<dbReference type="Proteomes" id="UP000001940">
    <property type="component" value="Chromosome III"/>
</dbReference>
<dbReference type="Bgee" id="WBGene00019679">
    <property type="expression patterns" value="Expressed in embryo and 4 other cell types or tissues"/>
</dbReference>
<dbReference type="GO" id="GO:0005787">
    <property type="term" value="C:signal peptidase complex"/>
    <property type="evidence" value="ECO:0000318"/>
    <property type="project" value="GO_Central"/>
</dbReference>
<dbReference type="GO" id="GO:0036498">
    <property type="term" value="P:IRE1-mediated unfolded protein response"/>
    <property type="evidence" value="ECO:0007007"/>
    <property type="project" value="WormBase"/>
</dbReference>
<dbReference type="GO" id="GO:0045047">
    <property type="term" value="P:protein targeting to ER"/>
    <property type="evidence" value="ECO:0000318"/>
    <property type="project" value="GO_Central"/>
</dbReference>
<dbReference type="GO" id="GO:0006465">
    <property type="term" value="P:signal peptide processing"/>
    <property type="evidence" value="ECO:0000318"/>
    <property type="project" value="GO_Central"/>
</dbReference>
<dbReference type="InterPro" id="IPR007653">
    <property type="entry name" value="SPC3"/>
</dbReference>
<dbReference type="PANTHER" id="PTHR12804">
    <property type="entry name" value="MICROSOMAL SIGNAL PEPTIDASE 23 KD SUBUNIT SPC22/23"/>
    <property type="match status" value="1"/>
</dbReference>
<dbReference type="PANTHER" id="PTHR12804:SF0">
    <property type="entry name" value="SIGNAL PEPTIDASE COMPLEX SUBUNIT 3"/>
    <property type="match status" value="1"/>
</dbReference>
<dbReference type="Pfam" id="PF04573">
    <property type="entry name" value="SPC22"/>
    <property type="match status" value="1"/>
</dbReference>
<dbReference type="PIRSF" id="PIRSF016089">
    <property type="entry name" value="SPC22"/>
    <property type="match status" value="1"/>
</dbReference>
<keyword id="KW-0256">Endoplasmic reticulum</keyword>
<keyword id="KW-0325">Glycoprotein</keyword>
<keyword id="KW-0472">Membrane</keyword>
<keyword id="KW-1185">Reference proteome</keyword>
<keyword id="KW-0735">Signal-anchor</keyword>
<keyword id="KW-0812">Transmembrane</keyword>
<keyword id="KW-1133">Transmembrane helix</keyword>
<accession>P34525</accession>
<comment type="function">
    <text evidence="2 3">Essential component of the signal peptidase complex (SPC) which catalyzes the cleavage of N-terminal signal sequences from nascent proteins as they are translocated into the lumen of the endoplasmic reticulum (By similarity). Essential for the SPC catalytic activity, possibly by stabilizing and positioning the active center of the complex close to the lumenal surface (By similarity).</text>
</comment>
<comment type="subunit">
    <text evidence="2">Component of the signal peptidase complex (SPC) composed of a catalytic subunit sec-11 and three accessory subunits spcs-1, spcs-2 and spcs-3. The complex induces a local thinning of the ER membrane which is used to measure the length of the signal peptide (SP) h-region of protein substrates. This ensures the selectivity of the complex towards h-regions shorter than 18-20 amino acids.</text>
</comment>
<comment type="subcellular location">
    <subcellularLocation>
        <location evidence="1">Endoplasmic reticulum membrane</location>
        <topology evidence="1">Single-pass type II membrane protein</topology>
    </subcellularLocation>
</comment>
<comment type="similarity">
    <text evidence="6">Belongs to the SPCS3 family.</text>
</comment>
<name>SPCS3_CAEEL</name>
<feature type="chain" id="PRO_0000218943" description="Signal peptidase complex subunit 3">
    <location>
        <begin position="1"/>
        <end position="180"/>
    </location>
</feature>
<feature type="topological domain" description="Cytoplasmic" evidence="1">
    <location>
        <begin position="1"/>
        <end position="12"/>
    </location>
</feature>
<feature type="transmembrane region" description="Helical; Signal-anchor for type II membrane protein" evidence="4">
    <location>
        <begin position="13"/>
        <end position="33"/>
    </location>
</feature>
<feature type="topological domain" description="Lumenal" evidence="1">
    <location>
        <begin position="34"/>
        <end position="180"/>
    </location>
</feature>
<feature type="glycosylation site" description="N-linked (GlcNAc...) asparagine" evidence="5">
    <location>
        <position position="141"/>
    </location>
</feature>
<protein>
    <recommendedName>
        <fullName>Signal peptidase complex subunit 3</fullName>
    </recommendedName>
    <alternativeName>
        <fullName>Microsomal signal peptidase 22 kDa subunit</fullName>
        <shortName>SPC22</shortName>
        <shortName>SPase 22 kDa subunit</shortName>
    </alternativeName>
</protein>
<organism>
    <name type="scientific">Caenorhabditis elegans</name>
    <dbReference type="NCBI Taxonomy" id="6239"/>
    <lineage>
        <taxon>Eukaryota</taxon>
        <taxon>Metazoa</taxon>
        <taxon>Ecdysozoa</taxon>
        <taxon>Nematoda</taxon>
        <taxon>Chromadorea</taxon>
        <taxon>Rhabditida</taxon>
        <taxon>Rhabditina</taxon>
        <taxon>Rhabditomorpha</taxon>
        <taxon>Rhabditoidea</taxon>
        <taxon>Rhabditidae</taxon>
        <taxon>Peloderinae</taxon>
        <taxon>Caenorhabditis</taxon>
    </lineage>
</organism>
<sequence length="180" mass="20687">MHNLLSRANALLAFTLWVMAAVTAACFLSTVFLDYTVPTKLTVNDVKVRNVVDYATDEQQADLATLNFNLKVDFSKIFNWNVKQLFVYLVAEYKSKVNEVNQVVLWDRIVERADRVVMDEIGVKSKYYFLDDGTNLLNHKNVTFVLRYNVIPNSGYLRLVQSSDQVVVPFPTTYTTTRRS</sequence>
<gene>
    <name evidence="7" type="primary">spcs-3</name>
    <name evidence="7" type="ORF">K12H4.4</name>
</gene>